<name>RPOC_POLNS</name>
<organism>
    <name type="scientific">Polynucleobacter necessarius subsp. necessarius (strain STIR1)</name>
    <dbReference type="NCBI Taxonomy" id="452638"/>
    <lineage>
        <taxon>Bacteria</taxon>
        <taxon>Pseudomonadati</taxon>
        <taxon>Pseudomonadota</taxon>
        <taxon>Betaproteobacteria</taxon>
        <taxon>Burkholderiales</taxon>
        <taxon>Burkholderiaceae</taxon>
        <taxon>Polynucleobacter</taxon>
    </lineage>
</organism>
<proteinExistence type="inferred from homology"/>
<evidence type="ECO:0000255" key="1">
    <source>
        <dbReference type="HAMAP-Rule" id="MF_01322"/>
    </source>
</evidence>
<dbReference type="EC" id="2.7.7.6" evidence="1"/>
<dbReference type="EMBL" id="CP001010">
    <property type="protein sequence ID" value="ACB43371.1"/>
    <property type="molecule type" value="Genomic_DNA"/>
</dbReference>
<dbReference type="SMR" id="B1XSP4"/>
<dbReference type="STRING" id="452638.Pnec_0043"/>
<dbReference type="KEGG" id="pne:Pnec_0043"/>
<dbReference type="eggNOG" id="COG0086">
    <property type="taxonomic scope" value="Bacteria"/>
</dbReference>
<dbReference type="HOGENOM" id="CLU_000524_3_1_4"/>
<dbReference type="OrthoDB" id="9815296at2"/>
<dbReference type="GO" id="GO:0000428">
    <property type="term" value="C:DNA-directed RNA polymerase complex"/>
    <property type="evidence" value="ECO:0007669"/>
    <property type="project" value="UniProtKB-KW"/>
</dbReference>
<dbReference type="GO" id="GO:0003677">
    <property type="term" value="F:DNA binding"/>
    <property type="evidence" value="ECO:0007669"/>
    <property type="project" value="UniProtKB-UniRule"/>
</dbReference>
<dbReference type="GO" id="GO:0003899">
    <property type="term" value="F:DNA-directed RNA polymerase activity"/>
    <property type="evidence" value="ECO:0007669"/>
    <property type="project" value="UniProtKB-UniRule"/>
</dbReference>
<dbReference type="GO" id="GO:0000287">
    <property type="term" value="F:magnesium ion binding"/>
    <property type="evidence" value="ECO:0007669"/>
    <property type="project" value="UniProtKB-UniRule"/>
</dbReference>
<dbReference type="GO" id="GO:0008270">
    <property type="term" value="F:zinc ion binding"/>
    <property type="evidence" value="ECO:0007669"/>
    <property type="project" value="UniProtKB-UniRule"/>
</dbReference>
<dbReference type="GO" id="GO:0006351">
    <property type="term" value="P:DNA-templated transcription"/>
    <property type="evidence" value="ECO:0007669"/>
    <property type="project" value="UniProtKB-UniRule"/>
</dbReference>
<dbReference type="CDD" id="cd02655">
    <property type="entry name" value="RNAP_beta'_C"/>
    <property type="match status" value="1"/>
</dbReference>
<dbReference type="CDD" id="cd01609">
    <property type="entry name" value="RNAP_beta'_N"/>
    <property type="match status" value="1"/>
</dbReference>
<dbReference type="FunFam" id="1.10.132.30:FF:000003">
    <property type="entry name" value="DNA-directed RNA polymerase subunit beta"/>
    <property type="match status" value="1"/>
</dbReference>
<dbReference type="FunFam" id="1.10.150.390:FF:000002">
    <property type="entry name" value="DNA-directed RNA polymerase subunit beta"/>
    <property type="match status" value="1"/>
</dbReference>
<dbReference type="FunFam" id="4.10.860.120:FF:000001">
    <property type="entry name" value="DNA-directed RNA polymerase subunit beta"/>
    <property type="match status" value="1"/>
</dbReference>
<dbReference type="Gene3D" id="1.10.132.30">
    <property type="match status" value="1"/>
</dbReference>
<dbReference type="Gene3D" id="1.10.150.390">
    <property type="match status" value="1"/>
</dbReference>
<dbReference type="Gene3D" id="1.10.1790.20">
    <property type="match status" value="1"/>
</dbReference>
<dbReference type="Gene3D" id="1.10.40.90">
    <property type="match status" value="1"/>
</dbReference>
<dbReference type="Gene3D" id="2.40.40.20">
    <property type="match status" value="1"/>
</dbReference>
<dbReference type="Gene3D" id="2.40.50.100">
    <property type="match status" value="3"/>
</dbReference>
<dbReference type="Gene3D" id="4.10.860.120">
    <property type="entry name" value="RNA polymerase II, clamp domain"/>
    <property type="match status" value="1"/>
</dbReference>
<dbReference type="Gene3D" id="1.10.274.100">
    <property type="entry name" value="RNA polymerase Rpb1, domain 3"/>
    <property type="match status" value="1"/>
</dbReference>
<dbReference type="HAMAP" id="MF_01322">
    <property type="entry name" value="RNApol_bact_RpoC"/>
    <property type="match status" value="1"/>
</dbReference>
<dbReference type="InterPro" id="IPR045867">
    <property type="entry name" value="DNA-dir_RpoC_beta_prime"/>
</dbReference>
<dbReference type="InterPro" id="IPR012754">
    <property type="entry name" value="DNA-dir_RpoC_beta_prime_bact"/>
</dbReference>
<dbReference type="InterPro" id="IPR000722">
    <property type="entry name" value="RNA_pol_asu"/>
</dbReference>
<dbReference type="InterPro" id="IPR006592">
    <property type="entry name" value="RNA_pol_N"/>
</dbReference>
<dbReference type="InterPro" id="IPR007080">
    <property type="entry name" value="RNA_pol_Rpb1_1"/>
</dbReference>
<dbReference type="InterPro" id="IPR007066">
    <property type="entry name" value="RNA_pol_Rpb1_3"/>
</dbReference>
<dbReference type="InterPro" id="IPR042102">
    <property type="entry name" value="RNA_pol_Rpb1_3_sf"/>
</dbReference>
<dbReference type="InterPro" id="IPR007083">
    <property type="entry name" value="RNA_pol_Rpb1_4"/>
</dbReference>
<dbReference type="InterPro" id="IPR007081">
    <property type="entry name" value="RNA_pol_Rpb1_5"/>
</dbReference>
<dbReference type="InterPro" id="IPR044893">
    <property type="entry name" value="RNA_pol_Rpb1_clamp_domain"/>
</dbReference>
<dbReference type="InterPro" id="IPR038120">
    <property type="entry name" value="Rpb1_funnel_sf"/>
</dbReference>
<dbReference type="NCBIfam" id="TIGR02386">
    <property type="entry name" value="rpoC_TIGR"/>
    <property type="match status" value="1"/>
</dbReference>
<dbReference type="PANTHER" id="PTHR19376">
    <property type="entry name" value="DNA-DIRECTED RNA POLYMERASE"/>
    <property type="match status" value="1"/>
</dbReference>
<dbReference type="PANTHER" id="PTHR19376:SF54">
    <property type="entry name" value="DNA-DIRECTED RNA POLYMERASE SUBUNIT BETA"/>
    <property type="match status" value="1"/>
</dbReference>
<dbReference type="Pfam" id="PF04997">
    <property type="entry name" value="RNA_pol_Rpb1_1"/>
    <property type="match status" value="1"/>
</dbReference>
<dbReference type="Pfam" id="PF00623">
    <property type="entry name" value="RNA_pol_Rpb1_2"/>
    <property type="match status" value="2"/>
</dbReference>
<dbReference type="Pfam" id="PF04983">
    <property type="entry name" value="RNA_pol_Rpb1_3"/>
    <property type="match status" value="1"/>
</dbReference>
<dbReference type="Pfam" id="PF05000">
    <property type="entry name" value="RNA_pol_Rpb1_4"/>
    <property type="match status" value="1"/>
</dbReference>
<dbReference type="Pfam" id="PF04998">
    <property type="entry name" value="RNA_pol_Rpb1_5"/>
    <property type="match status" value="1"/>
</dbReference>
<dbReference type="SMART" id="SM00663">
    <property type="entry name" value="RPOLA_N"/>
    <property type="match status" value="1"/>
</dbReference>
<dbReference type="SUPFAM" id="SSF64484">
    <property type="entry name" value="beta and beta-prime subunits of DNA dependent RNA-polymerase"/>
    <property type="match status" value="1"/>
</dbReference>
<comment type="function">
    <text evidence="1">DNA-dependent RNA polymerase catalyzes the transcription of DNA into RNA using the four ribonucleoside triphosphates as substrates.</text>
</comment>
<comment type="catalytic activity">
    <reaction evidence="1">
        <text>RNA(n) + a ribonucleoside 5'-triphosphate = RNA(n+1) + diphosphate</text>
        <dbReference type="Rhea" id="RHEA:21248"/>
        <dbReference type="Rhea" id="RHEA-COMP:14527"/>
        <dbReference type="Rhea" id="RHEA-COMP:17342"/>
        <dbReference type="ChEBI" id="CHEBI:33019"/>
        <dbReference type="ChEBI" id="CHEBI:61557"/>
        <dbReference type="ChEBI" id="CHEBI:140395"/>
        <dbReference type="EC" id="2.7.7.6"/>
    </reaction>
</comment>
<comment type="cofactor">
    <cofactor evidence="1">
        <name>Mg(2+)</name>
        <dbReference type="ChEBI" id="CHEBI:18420"/>
    </cofactor>
    <text evidence="1">Binds 1 Mg(2+) ion per subunit.</text>
</comment>
<comment type="cofactor">
    <cofactor evidence="1">
        <name>Zn(2+)</name>
        <dbReference type="ChEBI" id="CHEBI:29105"/>
    </cofactor>
    <text evidence="1">Binds 2 Zn(2+) ions per subunit.</text>
</comment>
<comment type="subunit">
    <text evidence="1">The RNAP catalytic core consists of 2 alpha, 1 beta, 1 beta' and 1 omega subunit. When a sigma factor is associated with the core the holoenzyme is formed, which can initiate transcription.</text>
</comment>
<comment type="similarity">
    <text evidence="1">Belongs to the RNA polymerase beta' chain family.</text>
</comment>
<gene>
    <name evidence="1" type="primary">rpoC</name>
    <name type="ordered locus">Pnec_0043</name>
</gene>
<protein>
    <recommendedName>
        <fullName evidence="1">DNA-directed RNA polymerase subunit beta'</fullName>
        <shortName evidence="1">RNAP subunit beta'</shortName>
        <ecNumber evidence="1">2.7.7.6</ecNumber>
    </recommendedName>
    <alternativeName>
        <fullName evidence="1">RNA polymerase subunit beta'</fullName>
    </alternativeName>
    <alternativeName>
        <fullName evidence="1">Transcriptase subunit beta'</fullName>
    </alternativeName>
</protein>
<reference key="1">
    <citation type="journal article" date="2013" name="Proc. Natl. Acad. Sci. U.S.A.">
        <title>Polynucleobacter necessarius, a model for genome reduction in both free-living and symbiotic bacteria.</title>
        <authorList>
            <person name="Boscaro V."/>
            <person name="Felletti M."/>
            <person name="Vannini C."/>
            <person name="Ackerman M.S."/>
            <person name="Chain P.S."/>
            <person name="Malfatti S."/>
            <person name="Vergez L.M."/>
            <person name="Shin M."/>
            <person name="Doak T.G."/>
            <person name="Lynch M."/>
            <person name="Petroni G."/>
        </authorList>
    </citation>
    <scope>NUCLEOTIDE SEQUENCE [LARGE SCALE GENOMIC DNA]</scope>
    <source>
        <strain>STIR1</strain>
    </source>
</reference>
<keyword id="KW-0240">DNA-directed RNA polymerase</keyword>
<keyword id="KW-0460">Magnesium</keyword>
<keyword id="KW-0479">Metal-binding</keyword>
<keyword id="KW-0548">Nucleotidyltransferase</keyword>
<keyword id="KW-0804">Transcription</keyword>
<keyword id="KW-0808">Transferase</keyword>
<keyword id="KW-0862">Zinc</keyword>
<accession>B1XSP4</accession>
<sequence>MKALLDLFKQTQGDEQFDVIKIGLASPEKIRSWSFGEVRKPEAINYRTFKPERDGLFCAKIFGPTKDYECLCGKYKRLKFRGIICEKCGVEVTLAKVRRERMGHIELAAPVAHIWFLKSLPSRLGMVLDMTLRDIERVLYFEAYVVVDPGMTPEGAMKRGQIMSEDEYIAKTEEYGDGVFTAIMGAEGIRDLLRSIDIDREVETIRADLKATGSDAKIKKYAKRLKVLEAFQTSGIKPDWMIMEVLPVLPPELRPLVPLDGGRFATSDLNDLYRRVINRNNRLKRLLELRAPEIIVRNEKRMLQEAVDSLLDNGRRGKAMTGANKRPLKSLAEMIKGKSGRFRQNLLGKRVDYSGRSVIVVGPTLKLHQCGLPKLMALELFKPFIFNKLETLGIATTIKAAKKEVESQTPIVWDILEEVIREHPIMLNRAPTLHRLGIQAFEPMLIEGKAIQLHPLVCAAFNADFDGDQMAVHVPLSLEAQMEARTLMLASNNVLFPANGEPSIVPSQDVVLGLYYATRDKINGKGEGMVFANITEVVRAYEAGQVELASRVAVRITEYEIVDKKAEGDARFAGKTKIYQTSVGRAILSEILPKGMSFEEINKPLKKKEISRLINTSFRKCGLRETVIFADRLLQSGFRLATNAGISVAIDDMLIPTSKERIITEASTKVKEYDKQFMSGLVTNQERYNNVVDIWGAAGDQVGKAMMDELSHVDVLDRNGKTVRQESFNSIYMMADSGARGSAAQIRQLAGMRGLMAKPDGSIIETPITANFREGLNVLQYFISTHGARKGLADTALKTANSGYLTRRLCDVTQDLVVIEEDCGATTGVTMKALVEGGEIIEALRDRILGRVCIGDIVHPDTQEVIVPNDTLLDEDHVDQIVALGIDEVKVRTVLSCLTRFGLCAKCYGRDLGRGGLVNVGEAVGVIAAQSIGEPGTQLTMRTFHIGGAASRALVASNIEAKSNGALKFSGTMRVVKNSRGEQIVISRSGEALIVDENGRERERHKVPYGATLLLKEDAAVKAGASLATWDPLTRPIISEYAGIARFDNVEEGVTVAKQVDEITGLSTLVVIDGKRRSAASKGVRPVINLIDDKGNDVMIAGTDHPVNIGLQVGALITVKDGQKVEVGEVLARIPIESQKTRDITGGLPRVAELFEARSPKDAAVLAKVTGTVSFGKETKGKQRLVITDMDGEANEFLIPKEKQVLVHDGQVVNKGEMIVEGPADPHDILTLKGIEELAIYIVDEVQDVYRLQGVKINDKHIEVIVRQMLRRVQVTDPGDTSFITGEQVERSKLYDENDRVIAEGKHPAQFDNVLLGITKASLSTDSFISAASFQETTRVLTEAAIMGKTDTLRGLKENVIIGRLIPAGTGLSYRRARKVREQFERDRAQMIAAEEEAMANMPVEIEAEVVALTGEADPS</sequence>
<feature type="chain" id="PRO_0000353405" description="DNA-directed RNA polymerase subunit beta'">
    <location>
        <begin position="1"/>
        <end position="1420"/>
    </location>
</feature>
<feature type="binding site" evidence="1">
    <location>
        <position position="70"/>
    </location>
    <ligand>
        <name>Zn(2+)</name>
        <dbReference type="ChEBI" id="CHEBI:29105"/>
        <label>1</label>
    </ligand>
</feature>
<feature type="binding site" evidence="1">
    <location>
        <position position="72"/>
    </location>
    <ligand>
        <name>Zn(2+)</name>
        <dbReference type="ChEBI" id="CHEBI:29105"/>
        <label>1</label>
    </ligand>
</feature>
<feature type="binding site" evidence="1">
    <location>
        <position position="85"/>
    </location>
    <ligand>
        <name>Zn(2+)</name>
        <dbReference type="ChEBI" id="CHEBI:29105"/>
        <label>1</label>
    </ligand>
</feature>
<feature type="binding site" evidence="1">
    <location>
        <position position="88"/>
    </location>
    <ligand>
        <name>Zn(2+)</name>
        <dbReference type="ChEBI" id="CHEBI:29105"/>
        <label>1</label>
    </ligand>
</feature>
<feature type="binding site" evidence="1">
    <location>
        <position position="464"/>
    </location>
    <ligand>
        <name>Mg(2+)</name>
        <dbReference type="ChEBI" id="CHEBI:18420"/>
    </ligand>
</feature>
<feature type="binding site" evidence="1">
    <location>
        <position position="466"/>
    </location>
    <ligand>
        <name>Mg(2+)</name>
        <dbReference type="ChEBI" id="CHEBI:18420"/>
    </ligand>
</feature>
<feature type="binding site" evidence="1">
    <location>
        <position position="468"/>
    </location>
    <ligand>
        <name>Mg(2+)</name>
        <dbReference type="ChEBI" id="CHEBI:18420"/>
    </ligand>
</feature>
<feature type="binding site" evidence="1">
    <location>
        <position position="823"/>
    </location>
    <ligand>
        <name>Zn(2+)</name>
        <dbReference type="ChEBI" id="CHEBI:29105"/>
        <label>2</label>
    </ligand>
</feature>
<feature type="binding site" evidence="1">
    <location>
        <position position="897"/>
    </location>
    <ligand>
        <name>Zn(2+)</name>
        <dbReference type="ChEBI" id="CHEBI:29105"/>
        <label>2</label>
    </ligand>
</feature>
<feature type="binding site" evidence="1">
    <location>
        <position position="904"/>
    </location>
    <ligand>
        <name>Zn(2+)</name>
        <dbReference type="ChEBI" id="CHEBI:29105"/>
        <label>2</label>
    </ligand>
</feature>
<feature type="binding site" evidence="1">
    <location>
        <position position="907"/>
    </location>
    <ligand>
        <name>Zn(2+)</name>
        <dbReference type="ChEBI" id="CHEBI:29105"/>
        <label>2</label>
    </ligand>
</feature>